<proteinExistence type="predicted"/>
<name>V15_SPTNK</name>
<sequence length="109" mass="12831">MAQIDNYDLFFSKMISDNITSKLFMKLTITIIITLVIIFIIFTLIILYFIKNKKQDHCINCKVENLDSSIKIDKNNTQKDYPSNFGFVEFPSELLGYNPKKFDNYAYIH</sequence>
<accession>B4YNF5</accession>
<protein>
    <recommendedName>
        <fullName>Uncharacterized protein V15</fullName>
    </recommendedName>
</protein>
<keyword id="KW-0472">Membrane</keyword>
<keyword id="KW-1185">Reference proteome</keyword>
<keyword id="KW-0812">Transmembrane</keyword>
<keyword id="KW-1133">Transmembrane helix</keyword>
<comment type="subcellular location">
    <subcellularLocation>
        <location evidence="2">Membrane</location>
        <topology evidence="2">Single-pass membrane protein</topology>
    </subcellularLocation>
</comment>
<organism>
    <name type="scientific">Sputnik virophage</name>
    <dbReference type="NCBI Taxonomy" id="543939"/>
    <lineage>
        <taxon>Viruses</taxon>
        <taxon>Varidnaviria</taxon>
        <taxon>Bamfordvirae</taxon>
        <taxon>Preplasmiviricota</taxon>
        <taxon>Maveriviricetes</taxon>
        <taxon>Priklausovirales</taxon>
        <taxon>Lavidaviridae</taxon>
        <taxon>Sputnikvirus</taxon>
        <taxon>Mimivirus-dependent virus Sputnik</taxon>
    </lineage>
</organism>
<organismHost>
    <name type="scientific">Acanthamoeba polyphaga</name>
    <name type="common">Amoeba</name>
    <dbReference type="NCBI Taxonomy" id="5757"/>
</organismHost>
<reference key="1">
    <citation type="journal article" date="2008" name="Nature">
        <title>The virophage as a unique parasite of the giant mimivirus.</title>
        <authorList>
            <person name="La Scola B."/>
            <person name="Desnues C."/>
            <person name="Pagnier I."/>
            <person name="Robert C."/>
            <person name="Barrassi L."/>
            <person name="Fournous G."/>
            <person name="Merchat M."/>
            <person name="Suzan-Monti M."/>
            <person name="Forterre P."/>
            <person name="Koonin E."/>
            <person name="Raoult D."/>
        </authorList>
    </citation>
    <scope>NUCLEOTIDE SEQUENCE [GENOMIC DNA]</scope>
</reference>
<dbReference type="EMBL" id="EU606015">
    <property type="protein sequence ID" value="ACF16999.1"/>
    <property type="molecule type" value="Genomic_DNA"/>
</dbReference>
<dbReference type="RefSeq" id="YP_002122376.1">
    <property type="nucleotide sequence ID" value="NC_011132.1"/>
</dbReference>
<dbReference type="SMR" id="B4YNF5"/>
<dbReference type="KEGG" id="vg:6760335"/>
<dbReference type="Proteomes" id="UP000001863">
    <property type="component" value="Segment"/>
</dbReference>
<dbReference type="GO" id="GO:0016020">
    <property type="term" value="C:membrane"/>
    <property type="evidence" value="ECO:0007669"/>
    <property type="project" value="UniProtKB-SubCell"/>
</dbReference>
<feature type="chain" id="PRO_0000369823" description="Uncharacterized protein V15">
    <location>
        <begin position="1"/>
        <end position="109"/>
    </location>
</feature>
<feature type="transmembrane region" description="Helical" evidence="1">
    <location>
        <begin position="29"/>
        <end position="49"/>
    </location>
</feature>
<evidence type="ECO:0000255" key="1"/>
<evidence type="ECO:0000305" key="2"/>
<gene>
    <name type="ORF">ORF15</name>
</gene>